<protein>
    <recommendedName>
        <fullName evidence="1">Large ribosomal subunit protein bL27</fullName>
    </recommendedName>
    <alternativeName>
        <fullName evidence="3">50S ribosomal protein L27</fullName>
    </alternativeName>
</protein>
<keyword id="KW-0687">Ribonucleoprotein</keyword>
<keyword id="KW-0689">Ribosomal protein</keyword>
<reference key="1">
    <citation type="submission" date="2008-02" db="EMBL/GenBank/DDBJ databases">
        <title>Complete sequence of Escherichia coli C str. ATCC 8739.</title>
        <authorList>
            <person name="Copeland A."/>
            <person name="Lucas S."/>
            <person name="Lapidus A."/>
            <person name="Glavina del Rio T."/>
            <person name="Dalin E."/>
            <person name="Tice H."/>
            <person name="Bruce D."/>
            <person name="Goodwin L."/>
            <person name="Pitluck S."/>
            <person name="Kiss H."/>
            <person name="Brettin T."/>
            <person name="Detter J.C."/>
            <person name="Han C."/>
            <person name="Kuske C.R."/>
            <person name="Schmutz J."/>
            <person name="Larimer F."/>
            <person name="Land M."/>
            <person name="Hauser L."/>
            <person name="Kyrpides N."/>
            <person name="Mikhailova N."/>
            <person name="Ingram L."/>
            <person name="Richardson P."/>
        </authorList>
    </citation>
    <scope>NUCLEOTIDE SEQUENCE [LARGE SCALE GENOMIC DNA]</scope>
    <source>
        <strain>ATCC 8739 / DSM 1576 / NBRC 3972 / NCIMB 8545 / WDCM 00012 / Crooks</strain>
    </source>
</reference>
<name>RL27_ECOLC</name>
<evidence type="ECO:0000255" key="1">
    <source>
        <dbReference type="HAMAP-Rule" id="MF_00539"/>
    </source>
</evidence>
<evidence type="ECO:0000256" key="2">
    <source>
        <dbReference type="SAM" id="MobiDB-lite"/>
    </source>
</evidence>
<evidence type="ECO:0000305" key="3"/>
<organism>
    <name type="scientific">Escherichia coli (strain ATCC 8739 / DSM 1576 / NBRC 3972 / NCIMB 8545 / WDCM 00012 / Crooks)</name>
    <dbReference type="NCBI Taxonomy" id="481805"/>
    <lineage>
        <taxon>Bacteria</taxon>
        <taxon>Pseudomonadati</taxon>
        <taxon>Pseudomonadota</taxon>
        <taxon>Gammaproteobacteria</taxon>
        <taxon>Enterobacterales</taxon>
        <taxon>Enterobacteriaceae</taxon>
        <taxon>Escherichia</taxon>
    </lineage>
</organism>
<dbReference type="EMBL" id="CP000946">
    <property type="protein sequence ID" value="ACA76192.1"/>
    <property type="molecule type" value="Genomic_DNA"/>
</dbReference>
<dbReference type="RefSeq" id="WP_000940595.1">
    <property type="nucleotide sequence ID" value="NZ_MTFT01000027.1"/>
</dbReference>
<dbReference type="SMR" id="B1IQT8"/>
<dbReference type="GeneID" id="93778796"/>
<dbReference type="KEGG" id="ecl:EcolC_0515"/>
<dbReference type="HOGENOM" id="CLU_095424_4_1_6"/>
<dbReference type="GO" id="GO:0022625">
    <property type="term" value="C:cytosolic large ribosomal subunit"/>
    <property type="evidence" value="ECO:0007669"/>
    <property type="project" value="TreeGrafter"/>
</dbReference>
<dbReference type="GO" id="GO:0003735">
    <property type="term" value="F:structural constituent of ribosome"/>
    <property type="evidence" value="ECO:0007669"/>
    <property type="project" value="InterPro"/>
</dbReference>
<dbReference type="GO" id="GO:0006412">
    <property type="term" value="P:translation"/>
    <property type="evidence" value="ECO:0007669"/>
    <property type="project" value="UniProtKB-UniRule"/>
</dbReference>
<dbReference type="FunFam" id="2.40.50.100:FF:000001">
    <property type="entry name" value="50S ribosomal protein L27"/>
    <property type="match status" value="1"/>
</dbReference>
<dbReference type="Gene3D" id="2.40.50.100">
    <property type="match status" value="1"/>
</dbReference>
<dbReference type="HAMAP" id="MF_00539">
    <property type="entry name" value="Ribosomal_bL27"/>
    <property type="match status" value="1"/>
</dbReference>
<dbReference type="InterPro" id="IPR001684">
    <property type="entry name" value="Ribosomal_bL27"/>
</dbReference>
<dbReference type="InterPro" id="IPR018261">
    <property type="entry name" value="Ribosomal_bL27_CS"/>
</dbReference>
<dbReference type="NCBIfam" id="TIGR00062">
    <property type="entry name" value="L27"/>
    <property type="match status" value="1"/>
</dbReference>
<dbReference type="PANTHER" id="PTHR15893:SF0">
    <property type="entry name" value="LARGE RIBOSOMAL SUBUNIT PROTEIN BL27M"/>
    <property type="match status" value="1"/>
</dbReference>
<dbReference type="PANTHER" id="PTHR15893">
    <property type="entry name" value="RIBOSOMAL PROTEIN L27"/>
    <property type="match status" value="1"/>
</dbReference>
<dbReference type="Pfam" id="PF01016">
    <property type="entry name" value="Ribosomal_L27"/>
    <property type="match status" value="1"/>
</dbReference>
<dbReference type="PRINTS" id="PR00063">
    <property type="entry name" value="RIBOSOMALL27"/>
</dbReference>
<dbReference type="SUPFAM" id="SSF110324">
    <property type="entry name" value="Ribosomal L27 protein-like"/>
    <property type="match status" value="1"/>
</dbReference>
<dbReference type="PROSITE" id="PS00831">
    <property type="entry name" value="RIBOSOMAL_L27"/>
    <property type="match status" value="1"/>
</dbReference>
<proteinExistence type="inferred from homology"/>
<feature type="chain" id="PRO_1000081888" description="Large ribosomal subunit protein bL27">
    <location>
        <begin position="1"/>
        <end position="85"/>
    </location>
</feature>
<feature type="region of interest" description="Disordered" evidence="2">
    <location>
        <begin position="1"/>
        <end position="20"/>
    </location>
</feature>
<gene>
    <name evidence="1" type="primary">rpmA</name>
    <name type="ordered locus">EcolC_0515</name>
</gene>
<accession>B1IQT8</accession>
<comment type="similarity">
    <text evidence="1">Belongs to the bacterial ribosomal protein bL27 family.</text>
</comment>
<sequence>MAHKKAGGSTRNGRDSEAKRLGVKRFGGESVLAGSIIVRQRGTKFHAGANVGCGRDHTLFAKADGKVKFEVKGPKNRKFISIEAE</sequence>